<proteinExistence type="inferred from homology"/>
<keyword id="KW-0150">Chloroplast</keyword>
<keyword id="KW-0249">Electron transport</keyword>
<keyword id="KW-0472">Membrane</keyword>
<keyword id="KW-0602">Photosynthesis</keyword>
<keyword id="KW-0934">Plastid</keyword>
<keyword id="KW-1185">Reference proteome</keyword>
<keyword id="KW-0793">Thylakoid</keyword>
<keyword id="KW-0812">Transmembrane</keyword>
<keyword id="KW-1133">Transmembrane helix</keyword>
<keyword id="KW-0813">Transport</keyword>
<organism>
    <name type="scientific">Oryza nivara</name>
    <name type="common">Indian wild rice</name>
    <name type="synonym">Oryza sativa f. spontanea</name>
    <dbReference type="NCBI Taxonomy" id="4536"/>
    <lineage>
        <taxon>Eukaryota</taxon>
        <taxon>Viridiplantae</taxon>
        <taxon>Streptophyta</taxon>
        <taxon>Embryophyta</taxon>
        <taxon>Tracheophyta</taxon>
        <taxon>Spermatophyta</taxon>
        <taxon>Magnoliopsida</taxon>
        <taxon>Liliopsida</taxon>
        <taxon>Poales</taxon>
        <taxon>Poaceae</taxon>
        <taxon>BOP clade</taxon>
        <taxon>Oryzoideae</taxon>
        <taxon>Oryzeae</taxon>
        <taxon>Oryzinae</taxon>
        <taxon>Oryza</taxon>
    </lineage>
</organism>
<name>PETD_ORYNI</name>
<sequence length="160" mass="17489">MGVSKKPDLNDPVLRAKLAKGMGHNYYGEPAWPNDLLYIFPVVILGTIACNVGLAVLEPSMIGEPADPFATPLEILPEWYFFPVFQILRTVPNKLLGVLLMVSVPTGLLTVPFLENVNKFQNPFRRPVATTVFLIGTAVALWLGIGATLPIEKSLTLGLF</sequence>
<geneLocation type="chloroplast"/>
<gene>
    <name evidence="2" type="primary">petD</name>
</gene>
<dbReference type="EMBL" id="AP006728">
    <property type="protein sequence ID" value="BAD26809.1"/>
    <property type="molecule type" value="Genomic_DNA"/>
</dbReference>
<dbReference type="RefSeq" id="YP_052780.1">
    <property type="nucleotide sequence ID" value="NC_005973.1"/>
</dbReference>
<dbReference type="SMR" id="Q6ENE3"/>
<dbReference type="STRING" id="4536.Q6ENE3"/>
<dbReference type="GeneID" id="2885880"/>
<dbReference type="Proteomes" id="UP000006591">
    <property type="component" value="Chloroplast"/>
</dbReference>
<dbReference type="GO" id="GO:0009535">
    <property type="term" value="C:chloroplast thylakoid membrane"/>
    <property type="evidence" value="ECO:0007669"/>
    <property type="project" value="UniProtKB-SubCell"/>
</dbReference>
<dbReference type="GO" id="GO:0009536">
    <property type="term" value="C:plastid"/>
    <property type="evidence" value="ECO:0000305"/>
    <property type="project" value="Gramene"/>
</dbReference>
<dbReference type="GO" id="GO:0045158">
    <property type="term" value="F:electron transporter, transferring electrons within cytochrome b6/f complex of photosystem II activity"/>
    <property type="evidence" value="ECO:0007669"/>
    <property type="project" value="UniProtKB-UniRule"/>
</dbReference>
<dbReference type="GO" id="GO:0045156">
    <property type="term" value="F:electron transporter, transferring electrons within the cyclic electron transport pathway of photosynthesis activity"/>
    <property type="evidence" value="ECO:0007669"/>
    <property type="project" value="InterPro"/>
</dbReference>
<dbReference type="GO" id="GO:0016491">
    <property type="term" value="F:oxidoreductase activity"/>
    <property type="evidence" value="ECO:0007669"/>
    <property type="project" value="InterPro"/>
</dbReference>
<dbReference type="GO" id="GO:0009767">
    <property type="term" value="P:photosynthetic electron transport chain"/>
    <property type="evidence" value="ECO:0007669"/>
    <property type="project" value="InterPro"/>
</dbReference>
<dbReference type="CDD" id="cd00290">
    <property type="entry name" value="cytochrome_b_C"/>
    <property type="match status" value="1"/>
</dbReference>
<dbReference type="FunFam" id="1.10.287.980:FF:000001">
    <property type="entry name" value="Cytochrome b6-f complex subunit 4"/>
    <property type="match status" value="1"/>
</dbReference>
<dbReference type="FunFam" id="1.20.5.510:FF:000002">
    <property type="entry name" value="Cytochrome b6-f complex subunit 4"/>
    <property type="match status" value="1"/>
</dbReference>
<dbReference type="Gene3D" id="1.10.287.980">
    <property type="entry name" value="plastocyanin oxidoreductase"/>
    <property type="match status" value="1"/>
</dbReference>
<dbReference type="Gene3D" id="1.20.5.510">
    <property type="entry name" value="Single helix bin"/>
    <property type="match status" value="1"/>
</dbReference>
<dbReference type="HAMAP" id="MF_01344">
    <property type="entry name" value="Cytb6_f_subIV"/>
    <property type="match status" value="1"/>
</dbReference>
<dbReference type="InterPro" id="IPR005798">
    <property type="entry name" value="Cyt_b/b6_C"/>
</dbReference>
<dbReference type="InterPro" id="IPR036150">
    <property type="entry name" value="Cyt_b/b6_C_sf"/>
</dbReference>
<dbReference type="InterPro" id="IPR005870">
    <property type="entry name" value="Cyt_b6/f_cplx_suIV"/>
</dbReference>
<dbReference type="InterPro" id="IPR048260">
    <property type="entry name" value="Cytochrome_b_C_euk/bac"/>
</dbReference>
<dbReference type="NCBIfam" id="TIGR01156">
    <property type="entry name" value="cytb6_f_IV"/>
    <property type="match status" value="1"/>
</dbReference>
<dbReference type="PANTHER" id="PTHR19271">
    <property type="entry name" value="CYTOCHROME B"/>
    <property type="match status" value="1"/>
</dbReference>
<dbReference type="PANTHER" id="PTHR19271:SF40">
    <property type="entry name" value="CYTOCHROME B"/>
    <property type="match status" value="1"/>
</dbReference>
<dbReference type="Pfam" id="PF00032">
    <property type="entry name" value="Cytochrom_B_C"/>
    <property type="match status" value="1"/>
</dbReference>
<dbReference type="PIRSF" id="PIRSF000033">
    <property type="entry name" value="B6f_17K"/>
    <property type="match status" value="1"/>
</dbReference>
<dbReference type="SUPFAM" id="SSF81648">
    <property type="entry name" value="a domain/subunit of cytochrome bc1 complex (Ubiquinol-cytochrome c reductase)"/>
    <property type="match status" value="1"/>
</dbReference>
<dbReference type="PROSITE" id="PS51003">
    <property type="entry name" value="CYTB_CTER"/>
    <property type="match status" value="1"/>
</dbReference>
<evidence type="ECO:0000250" key="1"/>
<evidence type="ECO:0000255" key="2">
    <source>
        <dbReference type="HAMAP-Rule" id="MF_01344"/>
    </source>
</evidence>
<evidence type="ECO:0000312" key="3">
    <source>
        <dbReference type="Proteomes" id="UP000006591"/>
    </source>
</evidence>
<reference key="1">
    <citation type="journal article" date="2004" name="Gene">
        <title>The complete nucleotide sequence of wild rice (Oryza nivara) chloroplast genome: first genome wide comparative sequence analysis of wild and cultivated rice.</title>
        <authorList>
            <person name="Masood M.S."/>
            <person name="Nishikawa T."/>
            <person name="Fukuoka S."/>
            <person name="Njenga P.K."/>
            <person name="Tsudzuki T."/>
            <person name="Kadowaki K."/>
        </authorList>
    </citation>
    <scope>NUCLEOTIDE SEQUENCE [LARGE SCALE GENOMIC DNA]</scope>
    <source>
        <strain evidence="3">cv. SL10</strain>
    </source>
</reference>
<feature type="chain" id="PRO_0000061876" description="Cytochrome b6-f complex subunit 4">
    <location>
        <begin position="1"/>
        <end position="160"/>
    </location>
</feature>
<feature type="transmembrane region" description="Helical" evidence="2">
    <location>
        <begin position="36"/>
        <end position="56"/>
    </location>
</feature>
<feature type="transmembrane region" description="Helical" evidence="2">
    <location>
        <begin position="95"/>
        <end position="115"/>
    </location>
</feature>
<feature type="transmembrane region" description="Helical" evidence="2">
    <location>
        <begin position="131"/>
        <end position="151"/>
    </location>
</feature>
<comment type="function">
    <text evidence="2">Component of the cytochrome b6-f complex, which mediates electron transfer between photosystem II (PSII) and photosystem I (PSI), cyclic electron flow around PSI, and state transitions.</text>
</comment>
<comment type="subunit">
    <text evidence="1">The 4 large subunits of the cytochrome b6-f complex are cytochrome b6, subunit IV (17 kDa polypeptide, petD), cytochrome f and the Rieske protein, while the 4 small subunits are petG, petL, petM and petN. The complex functions as a dimer (By similarity).</text>
</comment>
<comment type="subcellular location">
    <subcellularLocation>
        <location evidence="2">Plastid</location>
        <location evidence="2">Chloroplast thylakoid membrane</location>
        <topology evidence="2">Multi-pass membrane protein</topology>
    </subcellularLocation>
</comment>
<comment type="similarity">
    <text evidence="2">Belongs to the cytochrome b family. PetD subfamily.</text>
</comment>
<protein>
    <recommendedName>
        <fullName evidence="2">Cytochrome b6-f complex subunit 4</fullName>
    </recommendedName>
    <alternativeName>
        <fullName evidence="2">17 kDa polypeptide</fullName>
    </alternativeName>
</protein>
<accession>Q6ENE3</accession>